<name>MSRA_MYCGE</name>
<feature type="chain" id="PRO_0000138556" description="Peptide methionine sulfoxide reductase MsrA">
    <location>
        <begin position="1"/>
        <end position="157"/>
    </location>
</feature>
<feature type="active site" evidence="1">
    <location>
        <position position="10"/>
    </location>
</feature>
<protein>
    <recommendedName>
        <fullName>Peptide methionine sulfoxide reductase MsrA</fullName>
        <shortName>Protein-methionine-S-oxide reductase</shortName>
        <ecNumber>1.8.4.11</ecNumber>
    </recommendedName>
    <alternativeName>
        <fullName>Peptide-methionine (S)-S-oxide reductase</fullName>
        <shortName>Peptide Met(O) reductase</shortName>
    </alternativeName>
</protein>
<reference key="1">
    <citation type="journal article" date="1995" name="Science">
        <title>The minimal gene complement of Mycoplasma genitalium.</title>
        <authorList>
            <person name="Fraser C.M."/>
            <person name="Gocayne J.D."/>
            <person name="White O."/>
            <person name="Adams M.D."/>
            <person name="Clayton R.A."/>
            <person name="Fleischmann R.D."/>
            <person name="Bult C.J."/>
            <person name="Kerlavage A.R."/>
            <person name="Sutton G.G."/>
            <person name="Kelley J.M."/>
            <person name="Fritchman J.L."/>
            <person name="Weidman J.F."/>
            <person name="Small K.V."/>
            <person name="Sandusky M."/>
            <person name="Fuhrmann J.L."/>
            <person name="Nguyen D.T."/>
            <person name="Utterback T.R."/>
            <person name="Saudek D.M."/>
            <person name="Phillips C.A."/>
            <person name="Merrick J.M."/>
            <person name="Tomb J.-F."/>
            <person name="Dougherty B.A."/>
            <person name="Bott K.F."/>
            <person name="Hu P.-C."/>
            <person name="Lucier T.S."/>
            <person name="Peterson S.N."/>
            <person name="Smith H.O."/>
            <person name="Hutchison C.A. III"/>
            <person name="Venter J.C."/>
        </authorList>
    </citation>
    <scope>NUCLEOTIDE SEQUENCE [LARGE SCALE GENOMIC DNA]</scope>
    <source>
        <strain>ATCC 33530 / DSM 19775 / NCTC 10195 / G37</strain>
    </source>
</reference>
<reference key="2">
    <citation type="journal article" date="2001" name="J. Bacteriol.">
        <title>Peptide methionine sulfoxide reductase (MsrA) is a virulence determinant in Mycoplasma genitalium.</title>
        <authorList>
            <person name="Dhandayuthapani S."/>
            <person name="Blaylock M.W."/>
            <person name="Bebear C.M."/>
            <person name="Rasmussen W.G."/>
            <person name="Baseman J.B."/>
        </authorList>
    </citation>
    <scope>POSSIBLE FUNCTION IN VIRULENCE</scope>
    <scope>DISRUPTION PHENOTYPE</scope>
    <source>
        <strain>ATCC 33530 / DSM 19775 / NCTC 10195 / G37</strain>
    </source>
</reference>
<comment type="function">
    <text evidence="1">Has an important function as a repair enzyme for proteins that have been inactivated by oxidation. Catalyzes the reversible oxidation-reduction of methionine sulfoxide in proteins to methionine (By similarity).</text>
</comment>
<comment type="catalytic activity">
    <reaction>
        <text>L-methionyl-[protein] + [thioredoxin]-disulfide + H2O = L-methionyl-(S)-S-oxide-[protein] + [thioredoxin]-dithiol</text>
        <dbReference type="Rhea" id="RHEA:14217"/>
        <dbReference type="Rhea" id="RHEA-COMP:10698"/>
        <dbReference type="Rhea" id="RHEA-COMP:10700"/>
        <dbReference type="Rhea" id="RHEA-COMP:12313"/>
        <dbReference type="Rhea" id="RHEA-COMP:12315"/>
        <dbReference type="ChEBI" id="CHEBI:15377"/>
        <dbReference type="ChEBI" id="CHEBI:16044"/>
        <dbReference type="ChEBI" id="CHEBI:29950"/>
        <dbReference type="ChEBI" id="CHEBI:44120"/>
        <dbReference type="ChEBI" id="CHEBI:50058"/>
        <dbReference type="EC" id="1.8.4.11"/>
    </reaction>
</comment>
<comment type="catalytic activity">
    <reaction>
        <text>[thioredoxin]-disulfide + L-methionine + H2O = L-methionine (S)-S-oxide + [thioredoxin]-dithiol</text>
        <dbReference type="Rhea" id="RHEA:19993"/>
        <dbReference type="Rhea" id="RHEA-COMP:10698"/>
        <dbReference type="Rhea" id="RHEA-COMP:10700"/>
        <dbReference type="ChEBI" id="CHEBI:15377"/>
        <dbReference type="ChEBI" id="CHEBI:29950"/>
        <dbReference type="ChEBI" id="CHEBI:50058"/>
        <dbReference type="ChEBI" id="CHEBI:57844"/>
        <dbReference type="ChEBI" id="CHEBI:58772"/>
        <dbReference type="EC" id="1.8.4.11"/>
    </reaction>
</comment>
<comment type="disruption phenotype">
    <text evidence="2">Decreased agglutination to sheep erythrocytes and survival in hamster lungs and increased sensitivity to hydrogen peroxide.</text>
</comment>
<comment type="similarity">
    <text evidence="3">Belongs to the MsrA Met sulfoxide reductase family.</text>
</comment>
<keyword id="KW-0560">Oxidoreductase</keyword>
<keyword id="KW-1185">Reference proteome</keyword>
<organism>
    <name type="scientific">Mycoplasma genitalium (strain ATCC 33530 / DSM 19775 / NCTC 10195 / G37)</name>
    <name type="common">Mycoplasmoides genitalium</name>
    <dbReference type="NCBI Taxonomy" id="243273"/>
    <lineage>
        <taxon>Bacteria</taxon>
        <taxon>Bacillati</taxon>
        <taxon>Mycoplasmatota</taxon>
        <taxon>Mycoplasmoidales</taxon>
        <taxon>Mycoplasmoidaceae</taxon>
        <taxon>Mycoplasmoides</taxon>
    </lineage>
</organism>
<evidence type="ECO:0000250" key="1"/>
<evidence type="ECO:0000269" key="2">
    <source>
    </source>
</evidence>
<evidence type="ECO:0000305" key="3"/>
<sequence>MKEIYFGGGCFWGIEKYFQLIKGVKKTSVGYLNSRIRNPSYEQVCSGYTNAVEAVKVEYEEKEISLSELIEALFEVIDPTIRNRQGNDIGTQYRTGIYWTDSSDEKIINDKFLKLQKNYSKPIVTENKKVENYYLAEEYHQDYLKKNPNGYCHIKFD</sequence>
<dbReference type="EC" id="1.8.4.11"/>
<dbReference type="EMBL" id="L43967">
    <property type="protein sequence ID" value="AAC71636.1"/>
    <property type="molecule type" value="Genomic_DNA"/>
</dbReference>
<dbReference type="PIR" id="B64245">
    <property type="entry name" value="B64245"/>
</dbReference>
<dbReference type="RefSeq" id="WP_010869470.1">
    <property type="nucleotide sequence ID" value="NC_000908.2"/>
</dbReference>
<dbReference type="SMR" id="P47648"/>
<dbReference type="FunCoup" id="P47648">
    <property type="interactions" value="149"/>
</dbReference>
<dbReference type="STRING" id="243273.MG_408"/>
<dbReference type="GeneID" id="88282593"/>
<dbReference type="KEGG" id="mge:MG_408"/>
<dbReference type="eggNOG" id="COG0225">
    <property type="taxonomic scope" value="Bacteria"/>
</dbReference>
<dbReference type="HOGENOM" id="CLU_031040_10_2_14"/>
<dbReference type="InParanoid" id="P47648"/>
<dbReference type="OrthoDB" id="4174719at2"/>
<dbReference type="BioCyc" id="MGEN243273:G1GJ2-505-MONOMER"/>
<dbReference type="Proteomes" id="UP000000807">
    <property type="component" value="Chromosome"/>
</dbReference>
<dbReference type="GO" id="GO:0005737">
    <property type="term" value="C:cytoplasm"/>
    <property type="evidence" value="ECO:0000318"/>
    <property type="project" value="GO_Central"/>
</dbReference>
<dbReference type="GO" id="GO:0036456">
    <property type="term" value="F:L-methionine-(S)-S-oxide reductase activity"/>
    <property type="evidence" value="ECO:0000318"/>
    <property type="project" value="GO_Central"/>
</dbReference>
<dbReference type="GO" id="GO:0008113">
    <property type="term" value="F:peptide-methionine (S)-S-oxide reductase activity"/>
    <property type="evidence" value="ECO:0000318"/>
    <property type="project" value="GO_Central"/>
</dbReference>
<dbReference type="GO" id="GO:0034599">
    <property type="term" value="P:cellular response to oxidative stress"/>
    <property type="evidence" value="ECO:0000318"/>
    <property type="project" value="GO_Central"/>
</dbReference>
<dbReference type="GO" id="GO:0036211">
    <property type="term" value="P:protein modification process"/>
    <property type="evidence" value="ECO:0007669"/>
    <property type="project" value="UniProtKB-UniRule"/>
</dbReference>
<dbReference type="FunFam" id="3.30.1060.10:FF:000010">
    <property type="entry name" value="Peptide methionine sulfoxide reductase msrA"/>
    <property type="match status" value="1"/>
</dbReference>
<dbReference type="Gene3D" id="3.30.1060.10">
    <property type="entry name" value="Peptide methionine sulphoxide reductase MsrA"/>
    <property type="match status" value="1"/>
</dbReference>
<dbReference type="HAMAP" id="MF_01401">
    <property type="entry name" value="MsrA"/>
    <property type="match status" value="1"/>
</dbReference>
<dbReference type="InterPro" id="IPR002569">
    <property type="entry name" value="Met_Sox_Rdtase_MsrA_dom"/>
</dbReference>
<dbReference type="InterPro" id="IPR036509">
    <property type="entry name" value="Met_Sox_Rdtase_MsrA_sf"/>
</dbReference>
<dbReference type="InterPro" id="IPR050162">
    <property type="entry name" value="MsrA_MetSO_reductase"/>
</dbReference>
<dbReference type="NCBIfam" id="TIGR00401">
    <property type="entry name" value="msrA"/>
    <property type="match status" value="1"/>
</dbReference>
<dbReference type="PANTHER" id="PTHR42799">
    <property type="entry name" value="MITOCHONDRIAL PEPTIDE METHIONINE SULFOXIDE REDUCTASE"/>
    <property type="match status" value="1"/>
</dbReference>
<dbReference type="PANTHER" id="PTHR42799:SF2">
    <property type="entry name" value="MITOCHONDRIAL PEPTIDE METHIONINE SULFOXIDE REDUCTASE"/>
    <property type="match status" value="1"/>
</dbReference>
<dbReference type="Pfam" id="PF01625">
    <property type="entry name" value="PMSR"/>
    <property type="match status" value="1"/>
</dbReference>
<dbReference type="SUPFAM" id="SSF55068">
    <property type="entry name" value="Peptide methionine sulfoxide reductase"/>
    <property type="match status" value="1"/>
</dbReference>
<proteinExistence type="evidence at protein level"/>
<gene>
    <name type="primary">msrA</name>
    <name type="synonym">pmsR</name>
    <name type="ordered locus">MG408</name>
</gene>
<accession>P47648</accession>